<organism>
    <name type="scientific">Arabidopsis thaliana</name>
    <name type="common">Mouse-ear cress</name>
    <dbReference type="NCBI Taxonomy" id="3702"/>
    <lineage>
        <taxon>Eukaryota</taxon>
        <taxon>Viridiplantae</taxon>
        <taxon>Streptophyta</taxon>
        <taxon>Embryophyta</taxon>
        <taxon>Tracheophyta</taxon>
        <taxon>Spermatophyta</taxon>
        <taxon>Magnoliopsida</taxon>
        <taxon>eudicotyledons</taxon>
        <taxon>Gunneridae</taxon>
        <taxon>Pentapetalae</taxon>
        <taxon>rosids</taxon>
        <taxon>malvids</taxon>
        <taxon>Brassicales</taxon>
        <taxon>Brassicaceae</taxon>
        <taxon>Camelineae</taxon>
        <taxon>Arabidopsis</taxon>
    </lineage>
</organism>
<sequence>MSGFASQIPSMALLGSGLTGEVGLRVLFSPLSSNIVLRTACCSIGIGLPVYSTFKAIESGDENEQQKMLIYWAAYGSFSLVEVFTDKIISWFPLYYHVKFAFLVWLQLPTVEGSKQIYNNQIRPFLLRHQARVDQLVDGVYGEMVKVVRSHQGEIRFVRAMIAKILGSVNEDAPRLGEIANGSPVSETNSDSESDSNHED</sequence>
<proteinExistence type="evidence at transcript level"/>
<accession>Q6NLY8</accession>
<accession>O23209</accession>
<protein>
    <recommendedName>
        <fullName>HVA22-like protein k</fullName>
        <shortName>AtHVA22k</shortName>
    </recommendedName>
</protein>
<dbReference type="EMBL" id="Z99708">
    <property type="protein sequence ID" value="CAB16825.1"/>
    <property type="status" value="ALT_SEQ"/>
    <property type="molecule type" value="Genomic_DNA"/>
</dbReference>
<dbReference type="EMBL" id="AL161589">
    <property type="protein sequence ID" value="CAB80338.1"/>
    <property type="status" value="ALT_SEQ"/>
    <property type="molecule type" value="Genomic_DNA"/>
</dbReference>
<dbReference type="EMBL" id="CP002687">
    <property type="protein sequence ID" value="AEE86693.1"/>
    <property type="molecule type" value="Genomic_DNA"/>
</dbReference>
<dbReference type="EMBL" id="BT012190">
    <property type="protein sequence ID" value="AAS76284.1"/>
    <property type="molecule type" value="mRNA"/>
</dbReference>
<dbReference type="PIR" id="F85433">
    <property type="entry name" value="F85433"/>
</dbReference>
<dbReference type="RefSeq" id="NP_195390.2">
    <property type="nucleotide sequence ID" value="NM_119836.3"/>
</dbReference>
<dbReference type="SMR" id="Q6NLY8"/>
<dbReference type="BioGRID" id="15106">
    <property type="interactions" value="1"/>
</dbReference>
<dbReference type="FunCoup" id="Q6NLY8">
    <property type="interactions" value="640"/>
</dbReference>
<dbReference type="STRING" id="3702.Q6NLY8"/>
<dbReference type="PaxDb" id="3702-AT4G36720.1"/>
<dbReference type="ProteomicsDB" id="230369"/>
<dbReference type="EnsemblPlants" id="AT4G36720.1">
    <property type="protein sequence ID" value="AT4G36720.1"/>
    <property type="gene ID" value="AT4G36720"/>
</dbReference>
<dbReference type="GeneID" id="829825"/>
<dbReference type="Gramene" id="AT4G36720.1">
    <property type="protein sequence ID" value="AT4G36720.1"/>
    <property type="gene ID" value="AT4G36720"/>
</dbReference>
<dbReference type="KEGG" id="ath:AT4G36720"/>
<dbReference type="Araport" id="AT4G36720"/>
<dbReference type="TAIR" id="AT4G36720">
    <property type="gene designation" value="HVA22K"/>
</dbReference>
<dbReference type="eggNOG" id="KOG1725">
    <property type="taxonomic scope" value="Eukaryota"/>
</dbReference>
<dbReference type="HOGENOM" id="CLU_028431_4_1_1"/>
<dbReference type="InParanoid" id="Q6NLY8"/>
<dbReference type="OMA" id="CLVYWAA"/>
<dbReference type="OrthoDB" id="10009287at2759"/>
<dbReference type="PhylomeDB" id="Q6NLY8"/>
<dbReference type="PRO" id="PR:Q6NLY8"/>
<dbReference type="Proteomes" id="UP000006548">
    <property type="component" value="Chromosome 4"/>
</dbReference>
<dbReference type="ExpressionAtlas" id="Q6NLY8">
    <property type="expression patterns" value="baseline and differential"/>
</dbReference>
<dbReference type="InterPro" id="IPR004345">
    <property type="entry name" value="TB2_DP1_HVA22"/>
</dbReference>
<dbReference type="PANTHER" id="PTHR12300:SF150">
    <property type="entry name" value="HVA22-LIKE PROTEIN K"/>
    <property type="match status" value="1"/>
</dbReference>
<dbReference type="PANTHER" id="PTHR12300">
    <property type="entry name" value="HVA22-LIKE PROTEINS"/>
    <property type="match status" value="1"/>
</dbReference>
<dbReference type="Pfam" id="PF03134">
    <property type="entry name" value="TB2_DP1_HVA22"/>
    <property type="match status" value="1"/>
</dbReference>
<name>HA22K_ARATH</name>
<feature type="chain" id="PRO_0000101845" description="HVA22-like protein k">
    <location>
        <begin position="1"/>
        <end position="200"/>
    </location>
</feature>
<feature type="region of interest" description="Disordered" evidence="1">
    <location>
        <begin position="176"/>
        <end position="200"/>
    </location>
</feature>
<comment type="similarity">
    <text evidence="2">Belongs to the DP1 family.</text>
</comment>
<comment type="sequence caution" evidence="2">
    <conflict type="erroneous gene model prediction">
        <sequence resource="EMBL-CDS" id="CAB16825"/>
    </conflict>
</comment>
<comment type="sequence caution" evidence="2">
    <conflict type="erroneous gene model prediction">
        <sequence resource="EMBL-CDS" id="CAB80338"/>
    </conflict>
</comment>
<reference key="1">
    <citation type="journal article" date="1998" name="Nature">
        <title>Analysis of 1.9 Mb of contiguous sequence from chromosome 4 of Arabidopsis thaliana.</title>
        <authorList>
            <person name="Bevan M."/>
            <person name="Bancroft I."/>
            <person name="Bent E."/>
            <person name="Love K."/>
            <person name="Goodman H.M."/>
            <person name="Dean C."/>
            <person name="Bergkamp R."/>
            <person name="Dirkse W."/>
            <person name="van Staveren M."/>
            <person name="Stiekema W."/>
            <person name="Drost L."/>
            <person name="Ridley P."/>
            <person name="Hudson S.-A."/>
            <person name="Patel K."/>
            <person name="Murphy G."/>
            <person name="Piffanelli P."/>
            <person name="Wedler H."/>
            <person name="Wedler E."/>
            <person name="Wambutt R."/>
            <person name="Weitzenegger T."/>
            <person name="Pohl T."/>
            <person name="Terryn N."/>
            <person name="Gielen J."/>
            <person name="Villarroel R."/>
            <person name="De Clercq R."/>
            <person name="van Montagu M."/>
            <person name="Lecharny A."/>
            <person name="Aubourg S."/>
            <person name="Gy I."/>
            <person name="Kreis M."/>
            <person name="Lao N."/>
            <person name="Kavanagh T."/>
            <person name="Hempel S."/>
            <person name="Kotter P."/>
            <person name="Entian K.-D."/>
            <person name="Rieger M."/>
            <person name="Schaefer M."/>
            <person name="Funk B."/>
            <person name="Mueller-Auer S."/>
            <person name="Silvey M."/>
            <person name="James R."/>
            <person name="Monfort A."/>
            <person name="Pons A."/>
            <person name="Puigdomenech P."/>
            <person name="Douka A."/>
            <person name="Voukelatou E."/>
            <person name="Milioni D."/>
            <person name="Hatzopoulos P."/>
            <person name="Piravandi E."/>
            <person name="Obermaier B."/>
            <person name="Hilbert H."/>
            <person name="Duesterhoeft A."/>
            <person name="Moores T."/>
            <person name="Jones J.D.G."/>
            <person name="Eneva T."/>
            <person name="Palme K."/>
            <person name="Benes V."/>
            <person name="Rechmann S."/>
            <person name="Ansorge W."/>
            <person name="Cooke R."/>
            <person name="Berger C."/>
            <person name="Delseny M."/>
            <person name="Voet M."/>
            <person name="Volckaert G."/>
            <person name="Mewes H.-W."/>
            <person name="Klosterman S."/>
            <person name="Schueller C."/>
            <person name="Chalwatzis N."/>
        </authorList>
    </citation>
    <scope>NUCLEOTIDE SEQUENCE [LARGE SCALE GENOMIC DNA]</scope>
    <source>
        <strain>cv. Columbia</strain>
    </source>
</reference>
<reference key="2">
    <citation type="journal article" date="1999" name="Nature">
        <title>Sequence and analysis of chromosome 4 of the plant Arabidopsis thaliana.</title>
        <authorList>
            <person name="Mayer K.F.X."/>
            <person name="Schueller C."/>
            <person name="Wambutt R."/>
            <person name="Murphy G."/>
            <person name="Volckaert G."/>
            <person name="Pohl T."/>
            <person name="Duesterhoeft A."/>
            <person name="Stiekema W."/>
            <person name="Entian K.-D."/>
            <person name="Terryn N."/>
            <person name="Harris B."/>
            <person name="Ansorge W."/>
            <person name="Brandt P."/>
            <person name="Grivell L.A."/>
            <person name="Rieger M."/>
            <person name="Weichselgartner M."/>
            <person name="de Simone V."/>
            <person name="Obermaier B."/>
            <person name="Mache R."/>
            <person name="Mueller M."/>
            <person name="Kreis M."/>
            <person name="Delseny M."/>
            <person name="Puigdomenech P."/>
            <person name="Watson M."/>
            <person name="Schmidtheini T."/>
            <person name="Reichert B."/>
            <person name="Portetelle D."/>
            <person name="Perez-Alonso M."/>
            <person name="Boutry M."/>
            <person name="Bancroft I."/>
            <person name="Vos P."/>
            <person name="Hoheisel J."/>
            <person name="Zimmermann W."/>
            <person name="Wedler H."/>
            <person name="Ridley P."/>
            <person name="Langham S.-A."/>
            <person name="McCullagh B."/>
            <person name="Bilham L."/>
            <person name="Robben J."/>
            <person name="van der Schueren J."/>
            <person name="Grymonprez B."/>
            <person name="Chuang Y.-J."/>
            <person name="Vandenbussche F."/>
            <person name="Braeken M."/>
            <person name="Weltjens I."/>
            <person name="Voet M."/>
            <person name="Bastiaens I."/>
            <person name="Aert R."/>
            <person name="Defoor E."/>
            <person name="Weitzenegger T."/>
            <person name="Bothe G."/>
            <person name="Ramsperger U."/>
            <person name="Hilbert H."/>
            <person name="Braun M."/>
            <person name="Holzer E."/>
            <person name="Brandt A."/>
            <person name="Peters S."/>
            <person name="van Staveren M."/>
            <person name="Dirkse W."/>
            <person name="Mooijman P."/>
            <person name="Klein Lankhorst R."/>
            <person name="Rose M."/>
            <person name="Hauf J."/>
            <person name="Koetter P."/>
            <person name="Berneiser S."/>
            <person name="Hempel S."/>
            <person name="Feldpausch M."/>
            <person name="Lamberth S."/>
            <person name="Van den Daele H."/>
            <person name="De Keyser A."/>
            <person name="Buysshaert C."/>
            <person name="Gielen J."/>
            <person name="Villarroel R."/>
            <person name="De Clercq R."/>
            <person name="van Montagu M."/>
            <person name="Rogers J."/>
            <person name="Cronin A."/>
            <person name="Quail M.A."/>
            <person name="Bray-Allen S."/>
            <person name="Clark L."/>
            <person name="Doggett J."/>
            <person name="Hall S."/>
            <person name="Kay M."/>
            <person name="Lennard N."/>
            <person name="McLay K."/>
            <person name="Mayes R."/>
            <person name="Pettett A."/>
            <person name="Rajandream M.A."/>
            <person name="Lyne M."/>
            <person name="Benes V."/>
            <person name="Rechmann S."/>
            <person name="Borkova D."/>
            <person name="Bloecker H."/>
            <person name="Scharfe M."/>
            <person name="Grimm M."/>
            <person name="Loehnert T.-H."/>
            <person name="Dose S."/>
            <person name="de Haan M."/>
            <person name="Maarse A.C."/>
            <person name="Schaefer M."/>
            <person name="Mueller-Auer S."/>
            <person name="Gabel C."/>
            <person name="Fuchs M."/>
            <person name="Fartmann B."/>
            <person name="Granderath K."/>
            <person name="Dauner D."/>
            <person name="Herzl A."/>
            <person name="Neumann S."/>
            <person name="Argiriou A."/>
            <person name="Vitale D."/>
            <person name="Liguori R."/>
            <person name="Piravandi E."/>
            <person name="Massenet O."/>
            <person name="Quigley F."/>
            <person name="Clabauld G."/>
            <person name="Muendlein A."/>
            <person name="Felber R."/>
            <person name="Schnabl S."/>
            <person name="Hiller R."/>
            <person name="Schmidt W."/>
            <person name="Lecharny A."/>
            <person name="Aubourg S."/>
            <person name="Chefdor F."/>
            <person name="Cooke R."/>
            <person name="Berger C."/>
            <person name="Monfort A."/>
            <person name="Casacuberta E."/>
            <person name="Gibbons T."/>
            <person name="Weber N."/>
            <person name="Vandenbol M."/>
            <person name="Bargues M."/>
            <person name="Terol J."/>
            <person name="Torres A."/>
            <person name="Perez-Perez A."/>
            <person name="Purnelle B."/>
            <person name="Bent E."/>
            <person name="Johnson S."/>
            <person name="Tacon D."/>
            <person name="Jesse T."/>
            <person name="Heijnen L."/>
            <person name="Schwarz S."/>
            <person name="Scholler P."/>
            <person name="Heber S."/>
            <person name="Francs P."/>
            <person name="Bielke C."/>
            <person name="Frishman D."/>
            <person name="Haase D."/>
            <person name="Lemcke K."/>
            <person name="Mewes H.-W."/>
            <person name="Stocker S."/>
            <person name="Zaccaria P."/>
            <person name="Bevan M."/>
            <person name="Wilson R.K."/>
            <person name="de la Bastide M."/>
            <person name="Habermann K."/>
            <person name="Parnell L."/>
            <person name="Dedhia N."/>
            <person name="Gnoj L."/>
            <person name="Schutz K."/>
            <person name="Huang E."/>
            <person name="Spiegel L."/>
            <person name="Sekhon M."/>
            <person name="Murray J."/>
            <person name="Sheet P."/>
            <person name="Cordes M."/>
            <person name="Abu-Threideh J."/>
            <person name="Stoneking T."/>
            <person name="Kalicki J."/>
            <person name="Graves T."/>
            <person name="Harmon G."/>
            <person name="Edwards J."/>
            <person name="Latreille P."/>
            <person name="Courtney L."/>
            <person name="Cloud J."/>
            <person name="Abbott A."/>
            <person name="Scott K."/>
            <person name="Johnson D."/>
            <person name="Minx P."/>
            <person name="Bentley D."/>
            <person name="Fulton B."/>
            <person name="Miller N."/>
            <person name="Greco T."/>
            <person name="Kemp K."/>
            <person name="Kramer J."/>
            <person name="Fulton L."/>
            <person name="Mardis E."/>
            <person name="Dante M."/>
            <person name="Pepin K."/>
            <person name="Hillier L.W."/>
            <person name="Nelson J."/>
            <person name="Spieth J."/>
            <person name="Ryan E."/>
            <person name="Andrews S."/>
            <person name="Geisel C."/>
            <person name="Layman D."/>
            <person name="Du H."/>
            <person name="Ali J."/>
            <person name="Berghoff A."/>
            <person name="Jones K."/>
            <person name="Drone K."/>
            <person name="Cotton M."/>
            <person name="Joshu C."/>
            <person name="Antonoiu B."/>
            <person name="Zidanic M."/>
            <person name="Strong C."/>
            <person name="Sun H."/>
            <person name="Lamar B."/>
            <person name="Yordan C."/>
            <person name="Ma P."/>
            <person name="Zhong J."/>
            <person name="Preston R."/>
            <person name="Vil D."/>
            <person name="Shekher M."/>
            <person name="Matero A."/>
            <person name="Shah R."/>
            <person name="Swaby I.K."/>
            <person name="O'Shaughnessy A."/>
            <person name="Rodriguez M."/>
            <person name="Hoffman J."/>
            <person name="Till S."/>
            <person name="Granat S."/>
            <person name="Shohdy N."/>
            <person name="Hasegawa A."/>
            <person name="Hameed A."/>
            <person name="Lodhi M."/>
            <person name="Johnson A."/>
            <person name="Chen E."/>
            <person name="Marra M.A."/>
            <person name="Martienssen R."/>
            <person name="McCombie W.R."/>
        </authorList>
    </citation>
    <scope>NUCLEOTIDE SEQUENCE [LARGE SCALE GENOMIC DNA]</scope>
    <source>
        <strain>cv. Columbia</strain>
    </source>
</reference>
<reference key="3">
    <citation type="journal article" date="2017" name="Plant J.">
        <title>Araport11: a complete reannotation of the Arabidopsis thaliana reference genome.</title>
        <authorList>
            <person name="Cheng C.Y."/>
            <person name="Krishnakumar V."/>
            <person name="Chan A.P."/>
            <person name="Thibaud-Nissen F."/>
            <person name="Schobel S."/>
            <person name="Town C.D."/>
        </authorList>
    </citation>
    <scope>GENOME REANNOTATION</scope>
    <source>
        <strain>cv. Columbia</strain>
    </source>
</reference>
<reference key="4">
    <citation type="submission" date="2004-03" db="EMBL/GenBank/DDBJ databases">
        <authorList>
            <person name="Kim C.J."/>
            <person name="Chen H."/>
            <person name="Cheuk R.F."/>
            <person name="Shinn P."/>
            <person name="Carninci P."/>
            <person name="Hayashizaki Y."/>
            <person name="Ishida J."/>
            <person name="Kamiya A."/>
            <person name="Kawai J."/>
            <person name="Narusaka M."/>
            <person name="Sakurai T."/>
            <person name="Satou M."/>
            <person name="Seki M."/>
            <person name="Shinozaki K."/>
            <person name="Ecker J.R."/>
        </authorList>
    </citation>
    <scope>NUCLEOTIDE SEQUENCE [LARGE SCALE MRNA]</scope>
    <source>
        <strain>cv. Columbia</strain>
    </source>
</reference>
<keyword id="KW-1185">Reference proteome</keyword>
<gene>
    <name type="primary">HVA22K</name>
    <name type="ordered locus">At4g36720</name>
    <name type="ORF">C7A10.640</name>
</gene>
<evidence type="ECO:0000256" key="1">
    <source>
        <dbReference type="SAM" id="MobiDB-lite"/>
    </source>
</evidence>
<evidence type="ECO:0000305" key="2"/>